<accession>P83256</accession>
<comment type="function">
    <text evidence="2">Binds at site 4 of sodium channels (Nav) and inhibits the fast inactivation of cockroach channels. This toxin is active only on insects. Has a potent activity against S.litura larvae.</text>
</comment>
<comment type="subcellular location">
    <subcellularLocation>
        <location evidence="2">Secreted</location>
    </subcellularLocation>
</comment>
<comment type="tissue specificity">
    <text evidence="7">Expressed by the venom gland.</text>
</comment>
<comment type="domain">
    <text evidence="6">The presence of a 'disulfide through disulfide knot' structurally defines this protein as a knottin.</text>
</comment>
<comment type="mass spectrometry" mass="4037.9" method="MALDI" evidence="2"/>
<comment type="biotechnology">
    <text evidence="8">Could be considered as a biological insecticide candidate, when fused to Galanthus nivalis agglutinin (GNA), a protein with the potential to cross the insect gut. This chimeric Pl1a/GNA variant shows a gain in toxicity against insects when administered orally, while maintaining similar effects as the wild-type toxin when injected. Transport of Pl1a/GNA variant from gut contents to the hemolymph of cabbage moth larvae, and binding to the nerve cord, has been shown. This variant has been found to be orally toxic against cabbage moth (Mamestra brassicae), housefly (Musca domestica), and the hemipteran Acyrthosiphon pisum.</text>
</comment>
<comment type="similarity">
    <text evidence="6">Belongs to the neurotoxin 07 (Beta/delta-agtx) family. 02 (aga-3) subfamily.</text>
</comment>
<protein>
    <recommendedName>
        <fullName evidence="5">Delta-amaurobitoxin-Pl1a</fullName>
        <shortName evidence="6">Delta-AMATX-Pl1a</shortName>
    </recommendedName>
    <alternativeName>
        <fullName evidence="4">Delta-palutoxin IT1</fullName>
        <shortName evidence="4">Delta-paluIT1</shortName>
    </alternativeName>
</protein>
<reference key="1">
    <citation type="journal article" date="2000" name="Eur. J. Biochem.">
        <title>Isolation, synthesis and pharmacological characterization of delta-palutoxins IT, novel insecticidal toxins from the spider Paracoelotes luctuosus (Amaurobiidae).</title>
        <authorList>
            <person name="Corzo G."/>
            <person name="Escoubas P."/>
            <person name="Stankiewicz M."/>
            <person name="Pelhate M."/>
            <person name="Kristensen C.P."/>
            <person name="Nakajima T."/>
        </authorList>
    </citation>
    <scope>PROTEIN SEQUENCE</scope>
    <scope>SYNTHESIS</scope>
    <scope>FUNCTION</scope>
    <scope>DISULFIDE BONDS</scope>
    <scope>AMIDATION AT SER-37</scope>
    <scope>MASS SPECTROMETRY</scope>
    <scope>SUBCELLULAR LOCATION</scope>
    <source>
        <tissue>Venom</tissue>
    </source>
</reference>
<reference key="2">
    <citation type="journal article" date="2014" name="Insect Biochem. Mol. Biol.">
        <title>A recombinant fusion protein containing a spider toxin specific for the insect voltage-gated sodium ion channel shows oral toxicity towards insects of different orders.</title>
        <authorList>
            <person name="Yang S."/>
            <person name="Pyati P."/>
            <person name="Fitches E."/>
            <person name="Gatehouse J.A."/>
        </authorList>
    </citation>
    <scope>BIOTECHNOLOGY</scope>
    <scope>RECOMBINANT EXPRESSION AS A CHIMERIC VARIANT</scope>
</reference>
<reference key="3">
    <citation type="journal article" date="2005" name="Proteins">
        <title>Solution structure of two insect-specific spider toxins and their pharmacological interaction with the insect voltage-gated Na+ channel.</title>
        <authorList>
            <person name="Ferrat G."/>
            <person name="Bosmans F."/>
            <person name="Tytgat J."/>
            <person name="Pimentel C."/>
            <person name="Chagot B."/>
            <person name="Gilles N."/>
            <person name="Nakajima T."/>
            <person name="Darbon H."/>
            <person name="Corzo G."/>
        </authorList>
    </citation>
    <scope>STRUCTURE BY NMR</scope>
    <scope>DISULFIDE BONDS</scope>
    <scope>SYNTHESIS</scope>
</reference>
<proteinExistence type="evidence at protein level"/>
<sequence length="37" mass="4047">GCLGEGEKCADWSGPSCCDGFYCSCRSMPYCRCRNNS</sequence>
<name>T3D1A_PIRLC</name>
<evidence type="ECO:0000250" key="1"/>
<evidence type="ECO:0000269" key="2">
    <source>
    </source>
</evidence>
<evidence type="ECO:0000269" key="3">
    <source>
    </source>
</evidence>
<evidence type="ECO:0000303" key="4">
    <source>
    </source>
</evidence>
<evidence type="ECO:0000303" key="5">
    <source>
    </source>
</evidence>
<evidence type="ECO:0000305" key="6"/>
<evidence type="ECO:0000305" key="7">
    <source>
    </source>
</evidence>
<evidence type="ECO:0000305" key="8">
    <source>
    </source>
</evidence>
<evidence type="ECO:0007744" key="9">
    <source>
        <dbReference type="PDB" id="1V90"/>
    </source>
</evidence>
<evidence type="ECO:0007829" key="10">
    <source>
        <dbReference type="PDB" id="1V90"/>
    </source>
</evidence>
<dbReference type="PIR" id="A59401">
    <property type="entry name" value="A59401"/>
</dbReference>
<dbReference type="PDB" id="1V90">
    <property type="method" value="NMR"/>
    <property type="chains" value="A=1-37"/>
</dbReference>
<dbReference type="PDBsum" id="1V90"/>
<dbReference type="SMR" id="P83256"/>
<dbReference type="ArachnoServer" id="AS000301">
    <property type="toxin name" value="delta-Amaurobitoxin-Pl1a"/>
</dbReference>
<dbReference type="EvolutionaryTrace" id="P83256"/>
<dbReference type="GO" id="GO:0005576">
    <property type="term" value="C:extracellular region"/>
    <property type="evidence" value="ECO:0007669"/>
    <property type="project" value="UniProtKB-SubCell"/>
</dbReference>
<dbReference type="GO" id="GO:0019871">
    <property type="term" value="F:sodium channel inhibitor activity"/>
    <property type="evidence" value="ECO:0000314"/>
    <property type="project" value="UniProtKB"/>
</dbReference>
<dbReference type="GO" id="GO:0090729">
    <property type="term" value="F:toxin activity"/>
    <property type="evidence" value="ECO:0000314"/>
    <property type="project" value="UniProtKB"/>
</dbReference>
<dbReference type="InterPro" id="IPR016328">
    <property type="entry name" value="Beta/delta-agatoxin_fam"/>
</dbReference>
<dbReference type="Pfam" id="PF05980">
    <property type="entry name" value="Toxin_7"/>
    <property type="match status" value="1"/>
</dbReference>
<dbReference type="PIRSF" id="PIRSF001882">
    <property type="entry name" value="Curtatoxin"/>
    <property type="match status" value="1"/>
</dbReference>
<dbReference type="SUPFAM" id="SSF57059">
    <property type="entry name" value="omega toxin-like"/>
    <property type="match status" value="1"/>
</dbReference>
<dbReference type="PROSITE" id="PS60015">
    <property type="entry name" value="MU_AGATOXIN"/>
    <property type="match status" value="1"/>
</dbReference>
<feature type="peptide" id="PRO_0000044961" description="Delta-amaurobitoxin-Pl1a" evidence="2">
    <location>
        <begin position="1"/>
        <end position="37"/>
    </location>
</feature>
<feature type="site" description="Pharmacophore" evidence="1">
    <location>
        <position position="8"/>
    </location>
</feature>
<feature type="site" description="Pharmacophore" evidence="1">
    <location>
        <position position="12"/>
    </location>
</feature>
<feature type="site" description="Pharmacophore" evidence="1">
    <location>
        <position position="22"/>
    </location>
</feature>
<feature type="site" description="Pharmacophore" evidence="1">
    <location>
        <position position="24"/>
    </location>
</feature>
<feature type="site" description="Pharmacophore" evidence="1">
    <location>
        <position position="26"/>
    </location>
</feature>
<feature type="site" description="Pharmacophore" evidence="1">
    <location>
        <position position="28"/>
    </location>
</feature>
<feature type="site" description="Pharmacophore" evidence="1">
    <location>
        <position position="30"/>
    </location>
</feature>
<feature type="site" description="Pharmacophore" evidence="1">
    <location>
        <position position="32"/>
    </location>
</feature>
<feature type="site" description="Pharmacophore" evidence="1">
    <location>
        <position position="34"/>
    </location>
</feature>
<feature type="modified residue" description="Serine amide" evidence="2">
    <location>
        <position position="37"/>
    </location>
</feature>
<feature type="disulfide bond" evidence="2 3 9">
    <location>
        <begin position="2"/>
        <end position="18"/>
    </location>
</feature>
<feature type="disulfide bond" evidence="2 3 9">
    <location>
        <begin position="9"/>
        <end position="23"/>
    </location>
</feature>
<feature type="disulfide bond" evidence="2 3 9">
    <location>
        <begin position="17"/>
        <end position="33"/>
    </location>
</feature>
<feature type="disulfide bond" evidence="2 3 9">
    <location>
        <begin position="25"/>
        <end position="31"/>
    </location>
</feature>
<feature type="strand" evidence="10">
    <location>
        <begin position="5"/>
        <end position="7"/>
    </location>
</feature>
<feature type="turn" evidence="10">
    <location>
        <begin position="11"/>
        <end position="13"/>
    </location>
</feature>
<feature type="strand" evidence="10">
    <location>
        <begin position="26"/>
        <end position="29"/>
    </location>
</feature>
<keyword id="KW-0002">3D-structure</keyword>
<keyword id="KW-0027">Amidation</keyword>
<keyword id="KW-0903">Direct protein sequencing</keyword>
<keyword id="KW-1015">Disulfide bond</keyword>
<keyword id="KW-0872">Ion channel impairing toxin</keyword>
<keyword id="KW-0960">Knottin</keyword>
<keyword id="KW-0528">Neurotoxin</keyword>
<keyword id="KW-0964">Secreted</keyword>
<keyword id="KW-0800">Toxin</keyword>
<keyword id="KW-0738">Voltage-gated sodium channel impairing toxin</keyword>
<organism>
    <name type="scientific">Pireneitega luctuosa</name>
    <name type="common">Tangled nest spider</name>
    <name type="synonym">Paracoelotes luctuosus</name>
    <dbReference type="NCBI Taxonomy" id="185217"/>
    <lineage>
        <taxon>Eukaryota</taxon>
        <taxon>Metazoa</taxon>
        <taxon>Ecdysozoa</taxon>
        <taxon>Arthropoda</taxon>
        <taxon>Chelicerata</taxon>
        <taxon>Arachnida</taxon>
        <taxon>Araneae</taxon>
        <taxon>Araneomorphae</taxon>
        <taxon>Entelegynae</taxon>
        <taxon>Agelenidae</taxon>
        <taxon>Pireneitega</taxon>
    </lineage>
</organism>